<gene>
    <name evidence="1" type="primary">queF</name>
    <name type="ordered locus">PP_2160</name>
</gene>
<feature type="chain" id="PRO_0000163046" description="NADPH-dependent 7-cyano-7-deazaguanine reductase">
    <location>
        <begin position="1"/>
        <end position="276"/>
    </location>
</feature>
<feature type="active site" description="Thioimide intermediate" evidence="1">
    <location>
        <position position="184"/>
    </location>
</feature>
<feature type="active site" description="Proton donor" evidence="1">
    <location>
        <position position="191"/>
    </location>
</feature>
<feature type="binding site" evidence="1">
    <location>
        <begin position="83"/>
        <end position="85"/>
    </location>
    <ligand>
        <name>substrate</name>
    </ligand>
</feature>
<feature type="binding site" evidence="1">
    <location>
        <begin position="85"/>
        <end position="86"/>
    </location>
    <ligand>
        <name>NADPH</name>
        <dbReference type="ChEBI" id="CHEBI:57783"/>
    </ligand>
</feature>
<feature type="binding site" evidence="1">
    <location>
        <begin position="223"/>
        <end position="224"/>
    </location>
    <ligand>
        <name>substrate</name>
    </ligand>
</feature>
<feature type="binding site" evidence="1">
    <location>
        <begin position="252"/>
        <end position="253"/>
    </location>
    <ligand>
        <name>NADPH</name>
        <dbReference type="ChEBI" id="CHEBI:57783"/>
    </ligand>
</feature>
<keyword id="KW-0963">Cytoplasm</keyword>
<keyword id="KW-0521">NADP</keyword>
<keyword id="KW-0560">Oxidoreductase</keyword>
<keyword id="KW-0671">Queuosine biosynthesis</keyword>
<keyword id="KW-1185">Reference proteome</keyword>
<comment type="function">
    <text evidence="1">Catalyzes the NADPH-dependent reduction of 7-cyano-7-deazaguanine (preQ0) to 7-aminomethyl-7-deazaguanine (preQ1).</text>
</comment>
<comment type="catalytic activity">
    <reaction evidence="1">
        <text>7-aminomethyl-7-carbaguanine + 2 NADP(+) = 7-cyano-7-deazaguanine + 2 NADPH + 3 H(+)</text>
        <dbReference type="Rhea" id="RHEA:13409"/>
        <dbReference type="ChEBI" id="CHEBI:15378"/>
        <dbReference type="ChEBI" id="CHEBI:45075"/>
        <dbReference type="ChEBI" id="CHEBI:57783"/>
        <dbReference type="ChEBI" id="CHEBI:58349"/>
        <dbReference type="ChEBI" id="CHEBI:58703"/>
        <dbReference type="EC" id="1.7.1.13"/>
    </reaction>
</comment>
<comment type="pathway">
    <text evidence="1">tRNA modification; tRNA-queuosine biosynthesis.</text>
</comment>
<comment type="subunit">
    <text evidence="1">Homodimer.</text>
</comment>
<comment type="subcellular location">
    <subcellularLocation>
        <location evidence="1">Cytoplasm</location>
    </subcellularLocation>
</comment>
<comment type="similarity">
    <text evidence="1">Belongs to the GTP cyclohydrolase I family. QueF type 2 subfamily.</text>
</comment>
<name>QUEF_PSEPK</name>
<evidence type="ECO:0000255" key="1">
    <source>
        <dbReference type="HAMAP-Rule" id="MF_00817"/>
    </source>
</evidence>
<protein>
    <recommendedName>
        <fullName evidence="1">NADPH-dependent 7-cyano-7-deazaguanine reductase</fullName>
        <ecNumber evidence="1">1.7.1.13</ecNumber>
    </recommendedName>
    <alternativeName>
        <fullName evidence="1">7-cyano-7-carbaguanine reductase</fullName>
    </alternativeName>
    <alternativeName>
        <fullName evidence="1">NADPH-dependent nitrile oxidoreductase</fullName>
    </alternativeName>
    <alternativeName>
        <fullName evidence="1">PreQ(0) reductase</fullName>
    </alternativeName>
</protein>
<accession>Q88KX9</accession>
<organism>
    <name type="scientific">Pseudomonas putida (strain ATCC 47054 / DSM 6125 / CFBP 8728 / NCIMB 11950 / KT2440)</name>
    <dbReference type="NCBI Taxonomy" id="160488"/>
    <lineage>
        <taxon>Bacteria</taxon>
        <taxon>Pseudomonadati</taxon>
        <taxon>Pseudomonadota</taxon>
        <taxon>Gammaproteobacteria</taxon>
        <taxon>Pseudomonadales</taxon>
        <taxon>Pseudomonadaceae</taxon>
        <taxon>Pseudomonas</taxon>
    </lineage>
</organism>
<reference key="1">
    <citation type="journal article" date="2002" name="Environ. Microbiol.">
        <title>Complete genome sequence and comparative analysis of the metabolically versatile Pseudomonas putida KT2440.</title>
        <authorList>
            <person name="Nelson K.E."/>
            <person name="Weinel C."/>
            <person name="Paulsen I.T."/>
            <person name="Dodson R.J."/>
            <person name="Hilbert H."/>
            <person name="Martins dos Santos V.A.P."/>
            <person name="Fouts D.E."/>
            <person name="Gill S.R."/>
            <person name="Pop M."/>
            <person name="Holmes M."/>
            <person name="Brinkac L.M."/>
            <person name="Beanan M.J."/>
            <person name="DeBoy R.T."/>
            <person name="Daugherty S.C."/>
            <person name="Kolonay J.F."/>
            <person name="Madupu R."/>
            <person name="Nelson W.C."/>
            <person name="White O."/>
            <person name="Peterson J.D."/>
            <person name="Khouri H.M."/>
            <person name="Hance I."/>
            <person name="Chris Lee P."/>
            <person name="Holtzapple E.K."/>
            <person name="Scanlan D."/>
            <person name="Tran K."/>
            <person name="Moazzez A."/>
            <person name="Utterback T.R."/>
            <person name="Rizzo M."/>
            <person name="Lee K."/>
            <person name="Kosack D."/>
            <person name="Moestl D."/>
            <person name="Wedler H."/>
            <person name="Lauber J."/>
            <person name="Stjepandic D."/>
            <person name="Hoheisel J."/>
            <person name="Straetz M."/>
            <person name="Heim S."/>
            <person name="Kiewitz C."/>
            <person name="Eisen J.A."/>
            <person name="Timmis K.N."/>
            <person name="Duesterhoeft A."/>
            <person name="Tuemmler B."/>
            <person name="Fraser C.M."/>
        </authorList>
    </citation>
    <scope>NUCLEOTIDE SEQUENCE [LARGE SCALE GENOMIC DNA]</scope>
    <source>
        <strain>ATCC 47054 / DSM 6125 / CFBP 8728 / NCIMB 11950 / KT2440</strain>
    </source>
</reference>
<sequence length="276" mass="30686">MHPAAEHSPLGKSSEYIATYSPEQLFPIPRTAKWAELGVTAQTLPWQGVDYWNCFELSWLLPSGKPVVAIGEFAIPADSPNIIESKSFKLYLNSLNQTVFTSLGALQVCLEKDLSAAAGKPVGVKVRTLAEVEAQGVVALPGQCIDALDVAISNYEQPQPELLRCNPERVVEETLHSHLLKSNCPVTGQPDWGSVVVQYKGRALDHASLLTYLISFRQHADFHEQCVERIYLDLKNLLQPEHLTVYARYVRRGGLDINPYRSTGPISPDNKRLVRQ</sequence>
<proteinExistence type="inferred from homology"/>
<dbReference type="EC" id="1.7.1.13" evidence="1"/>
<dbReference type="EMBL" id="AE015451">
    <property type="protein sequence ID" value="AAN67773.1"/>
    <property type="molecule type" value="Genomic_DNA"/>
</dbReference>
<dbReference type="RefSeq" id="NP_744309.1">
    <property type="nucleotide sequence ID" value="NC_002947.4"/>
</dbReference>
<dbReference type="RefSeq" id="WP_010953147.1">
    <property type="nucleotide sequence ID" value="NZ_CP169744.1"/>
</dbReference>
<dbReference type="SMR" id="Q88KX9"/>
<dbReference type="STRING" id="160488.PP_2160"/>
<dbReference type="PaxDb" id="160488-PP_2160"/>
<dbReference type="GeneID" id="83681319"/>
<dbReference type="KEGG" id="ppu:PP_2160"/>
<dbReference type="PATRIC" id="fig|160488.4.peg.2277"/>
<dbReference type="eggNOG" id="COG0780">
    <property type="taxonomic scope" value="Bacteria"/>
</dbReference>
<dbReference type="eggNOG" id="COG2904">
    <property type="taxonomic scope" value="Bacteria"/>
</dbReference>
<dbReference type="HOGENOM" id="CLU_054738_0_0_6"/>
<dbReference type="OrthoDB" id="9789995at2"/>
<dbReference type="PhylomeDB" id="Q88KX9"/>
<dbReference type="BioCyc" id="PPUT160488:G1G01-2301-MONOMER"/>
<dbReference type="UniPathway" id="UPA00392"/>
<dbReference type="Proteomes" id="UP000000556">
    <property type="component" value="Chromosome"/>
</dbReference>
<dbReference type="GO" id="GO:0005737">
    <property type="term" value="C:cytoplasm"/>
    <property type="evidence" value="ECO:0007669"/>
    <property type="project" value="UniProtKB-SubCell"/>
</dbReference>
<dbReference type="GO" id="GO:0033739">
    <property type="term" value="F:preQ1 synthase activity"/>
    <property type="evidence" value="ECO:0007669"/>
    <property type="project" value="UniProtKB-UniRule"/>
</dbReference>
<dbReference type="GO" id="GO:0008616">
    <property type="term" value="P:queuosine biosynthetic process"/>
    <property type="evidence" value="ECO:0007669"/>
    <property type="project" value="UniProtKB-UniRule"/>
</dbReference>
<dbReference type="GO" id="GO:0006400">
    <property type="term" value="P:tRNA modification"/>
    <property type="evidence" value="ECO:0007669"/>
    <property type="project" value="UniProtKB-UniRule"/>
</dbReference>
<dbReference type="Gene3D" id="3.30.1130.10">
    <property type="match status" value="2"/>
</dbReference>
<dbReference type="HAMAP" id="MF_00817">
    <property type="entry name" value="QueF_type2"/>
    <property type="match status" value="1"/>
</dbReference>
<dbReference type="InterPro" id="IPR043133">
    <property type="entry name" value="GTP-CH-I_C/QueF"/>
</dbReference>
<dbReference type="InterPro" id="IPR050084">
    <property type="entry name" value="NADPH_dep_7-cyano-7-deazaG_red"/>
</dbReference>
<dbReference type="InterPro" id="IPR029500">
    <property type="entry name" value="QueF"/>
</dbReference>
<dbReference type="InterPro" id="IPR029139">
    <property type="entry name" value="QueF_N"/>
</dbReference>
<dbReference type="InterPro" id="IPR016428">
    <property type="entry name" value="QueF_type2"/>
</dbReference>
<dbReference type="NCBIfam" id="TIGR03138">
    <property type="entry name" value="QueF"/>
    <property type="match status" value="1"/>
</dbReference>
<dbReference type="PANTHER" id="PTHR34354">
    <property type="entry name" value="NADPH-DEPENDENT 7-CYANO-7-DEAZAGUANINE REDUCTASE"/>
    <property type="match status" value="1"/>
</dbReference>
<dbReference type="PANTHER" id="PTHR34354:SF1">
    <property type="entry name" value="NADPH-DEPENDENT 7-CYANO-7-DEAZAGUANINE REDUCTASE"/>
    <property type="match status" value="1"/>
</dbReference>
<dbReference type="Pfam" id="PF14489">
    <property type="entry name" value="QueF"/>
    <property type="match status" value="1"/>
</dbReference>
<dbReference type="Pfam" id="PF14819">
    <property type="entry name" value="QueF_N"/>
    <property type="match status" value="1"/>
</dbReference>
<dbReference type="PIRSF" id="PIRSF004750">
    <property type="entry name" value="Nitrile_oxidored_YqcD_prd"/>
    <property type="match status" value="1"/>
</dbReference>
<dbReference type="SUPFAM" id="SSF55620">
    <property type="entry name" value="Tetrahydrobiopterin biosynthesis enzymes-like"/>
    <property type="match status" value="1"/>
</dbReference>